<comment type="subunit">
    <text evidence="1">Interacts with CCNA1.</text>
</comment>
<proteinExistence type="evidence at protein level"/>
<gene>
    <name type="primary">Klhdc9</name>
</gene>
<evidence type="ECO:0000250" key="1"/>
<accession>Q3USL1</accession>
<accession>Q8BVR4</accession>
<protein>
    <recommendedName>
        <fullName>Kelch domain-containing protein 9</fullName>
    </recommendedName>
</protein>
<name>KLDC9_MOUSE</name>
<feature type="chain" id="PRO_0000300465" description="Kelch domain-containing protein 9">
    <location>
        <begin position="1"/>
        <end position="350"/>
    </location>
</feature>
<feature type="repeat" description="Kelch 1">
    <location>
        <begin position="39"/>
        <end position="89"/>
    </location>
</feature>
<feature type="repeat" description="Kelch 2">
    <location>
        <begin position="91"/>
        <end position="137"/>
    </location>
</feature>
<feature type="repeat" description="Kelch 3">
    <location>
        <begin position="325"/>
        <end position="350"/>
    </location>
</feature>
<organism>
    <name type="scientific">Mus musculus</name>
    <name type="common">Mouse</name>
    <dbReference type="NCBI Taxonomy" id="10090"/>
    <lineage>
        <taxon>Eukaryota</taxon>
        <taxon>Metazoa</taxon>
        <taxon>Chordata</taxon>
        <taxon>Craniata</taxon>
        <taxon>Vertebrata</taxon>
        <taxon>Euteleostomi</taxon>
        <taxon>Mammalia</taxon>
        <taxon>Eutheria</taxon>
        <taxon>Euarchontoglires</taxon>
        <taxon>Glires</taxon>
        <taxon>Rodentia</taxon>
        <taxon>Myomorpha</taxon>
        <taxon>Muroidea</taxon>
        <taxon>Muridae</taxon>
        <taxon>Murinae</taxon>
        <taxon>Mus</taxon>
        <taxon>Mus</taxon>
    </lineage>
</organism>
<keyword id="KW-0880">Kelch repeat</keyword>
<keyword id="KW-1185">Reference proteome</keyword>
<keyword id="KW-0677">Repeat</keyword>
<sequence length="350" mass="38185">MAGVQTLGRARGSTWTWRPVARDVLLARAFHSCTELEGRFYLVGGLLEGGARVPSNDTVIFDPAVGQAVRLVARGSPLRSHHDAALVGGRWLCVVGGWDGSRRLSTVAALDTEREVWEAWAANPGNCPPAGLSSHTCTRLSDGELRVSGREGGTHTQRRYGSIYTLKLDHRTRTYCYKEEGCHTTSRSGHCAALLPTAGPHPGHQLLLFGGCNSVGPEVAGQWSPGKIKEEQPVAPHLREQLARLVSSGQGLQQGPQSLRHHSCSVVGPFAVLFGGETLTRARDTICNDLYIYDTRKSPPLWFHFPSTDRGLKRVGHRTCLWNDQLYLVGGFGEDGRTASPQVCILEFFI</sequence>
<reference key="1">
    <citation type="journal article" date="2005" name="Science">
        <title>The transcriptional landscape of the mammalian genome.</title>
        <authorList>
            <person name="Carninci P."/>
            <person name="Kasukawa T."/>
            <person name="Katayama S."/>
            <person name="Gough J."/>
            <person name="Frith M.C."/>
            <person name="Maeda N."/>
            <person name="Oyama R."/>
            <person name="Ravasi T."/>
            <person name="Lenhard B."/>
            <person name="Wells C."/>
            <person name="Kodzius R."/>
            <person name="Shimokawa K."/>
            <person name="Bajic V.B."/>
            <person name="Brenner S.E."/>
            <person name="Batalov S."/>
            <person name="Forrest A.R."/>
            <person name="Zavolan M."/>
            <person name="Davis M.J."/>
            <person name="Wilming L.G."/>
            <person name="Aidinis V."/>
            <person name="Allen J.E."/>
            <person name="Ambesi-Impiombato A."/>
            <person name="Apweiler R."/>
            <person name="Aturaliya R.N."/>
            <person name="Bailey T.L."/>
            <person name="Bansal M."/>
            <person name="Baxter L."/>
            <person name="Beisel K.W."/>
            <person name="Bersano T."/>
            <person name="Bono H."/>
            <person name="Chalk A.M."/>
            <person name="Chiu K.P."/>
            <person name="Choudhary V."/>
            <person name="Christoffels A."/>
            <person name="Clutterbuck D.R."/>
            <person name="Crowe M.L."/>
            <person name="Dalla E."/>
            <person name="Dalrymple B.P."/>
            <person name="de Bono B."/>
            <person name="Della Gatta G."/>
            <person name="di Bernardo D."/>
            <person name="Down T."/>
            <person name="Engstrom P."/>
            <person name="Fagiolini M."/>
            <person name="Faulkner G."/>
            <person name="Fletcher C.F."/>
            <person name="Fukushima T."/>
            <person name="Furuno M."/>
            <person name="Futaki S."/>
            <person name="Gariboldi M."/>
            <person name="Georgii-Hemming P."/>
            <person name="Gingeras T.R."/>
            <person name="Gojobori T."/>
            <person name="Green R.E."/>
            <person name="Gustincich S."/>
            <person name="Harbers M."/>
            <person name="Hayashi Y."/>
            <person name="Hensch T.K."/>
            <person name="Hirokawa N."/>
            <person name="Hill D."/>
            <person name="Huminiecki L."/>
            <person name="Iacono M."/>
            <person name="Ikeo K."/>
            <person name="Iwama A."/>
            <person name="Ishikawa T."/>
            <person name="Jakt M."/>
            <person name="Kanapin A."/>
            <person name="Katoh M."/>
            <person name="Kawasawa Y."/>
            <person name="Kelso J."/>
            <person name="Kitamura H."/>
            <person name="Kitano H."/>
            <person name="Kollias G."/>
            <person name="Krishnan S.P."/>
            <person name="Kruger A."/>
            <person name="Kummerfeld S.K."/>
            <person name="Kurochkin I.V."/>
            <person name="Lareau L.F."/>
            <person name="Lazarevic D."/>
            <person name="Lipovich L."/>
            <person name="Liu J."/>
            <person name="Liuni S."/>
            <person name="McWilliam S."/>
            <person name="Madan Babu M."/>
            <person name="Madera M."/>
            <person name="Marchionni L."/>
            <person name="Matsuda H."/>
            <person name="Matsuzawa S."/>
            <person name="Miki H."/>
            <person name="Mignone F."/>
            <person name="Miyake S."/>
            <person name="Morris K."/>
            <person name="Mottagui-Tabar S."/>
            <person name="Mulder N."/>
            <person name="Nakano N."/>
            <person name="Nakauchi H."/>
            <person name="Ng P."/>
            <person name="Nilsson R."/>
            <person name="Nishiguchi S."/>
            <person name="Nishikawa S."/>
            <person name="Nori F."/>
            <person name="Ohara O."/>
            <person name="Okazaki Y."/>
            <person name="Orlando V."/>
            <person name="Pang K.C."/>
            <person name="Pavan W.J."/>
            <person name="Pavesi G."/>
            <person name="Pesole G."/>
            <person name="Petrovsky N."/>
            <person name="Piazza S."/>
            <person name="Reed J."/>
            <person name="Reid J.F."/>
            <person name="Ring B.Z."/>
            <person name="Ringwald M."/>
            <person name="Rost B."/>
            <person name="Ruan Y."/>
            <person name="Salzberg S.L."/>
            <person name="Sandelin A."/>
            <person name="Schneider C."/>
            <person name="Schoenbach C."/>
            <person name="Sekiguchi K."/>
            <person name="Semple C.A."/>
            <person name="Seno S."/>
            <person name="Sessa L."/>
            <person name="Sheng Y."/>
            <person name="Shibata Y."/>
            <person name="Shimada H."/>
            <person name="Shimada K."/>
            <person name="Silva D."/>
            <person name="Sinclair B."/>
            <person name="Sperling S."/>
            <person name="Stupka E."/>
            <person name="Sugiura K."/>
            <person name="Sultana R."/>
            <person name="Takenaka Y."/>
            <person name="Taki K."/>
            <person name="Tammoja K."/>
            <person name="Tan S.L."/>
            <person name="Tang S."/>
            <person name="Taylor M.S."/>
            <person name="Tegner J."/>
            <person name="Teichmann S.A."/>
            <person name="Ueda H.R."/>
            <person name="van Nimwegen E."/>
            <person name="Verardo R."/>
            <person name="Wei C.L."/>
            <person name="Yagi K."/>
            <person name="Yamanishi H."/>
            <person name="Zabarovsky E."/>
            <person name="Zhu S."/>
            <person name="Zimmer A."/>
            <person name="Hide W."/>
            <person name="Bult C."/>
            <person name="Grimmond S.M."/>
            <person name="Teasdale R.D."/>
            <person name="Liu E.T."/>
            <person name="Brusic V."/>
            <person name="Quackenbush J."/>
            <person name="Wahlestedt C."/>
            <person name="Mattick J.S."/>
            <person name="Hume D.A."/>
            <person name="Kai C."/>
            <person name="Sasaki D."/>
            <person name="Tomaru Y."/>
            <person name="Fukuda S."/>
            <person name="Kanamori-Katayama M."/>
            <person name="Suzuki M."/>
            <person name="Aoki J."/>
            <person name="Arakawa T."/>
            <person name="Iida J."/>
            <person name="Imamura K."/>
            <person name="Itoh M."/>
            <person name="Kato T."/>
            <person name="Kawaji H."/>
            <person name="Kawagashira N."/>
            <person name="Kawashima T."/>
            <person name="Kojima M."/>
            <person name="Kondo S."/>
            <person name="Konno H."/>
            <person name="Nakano K."/>
            <person name="Ninomiya N."/>
            <person name="Nishio T."/>
            <person name="Okada M."/>
            <person name="Plessy C."/>
            <person name="Shibata K."/>
            <person name="Shiraki T."/>
            <person name="Suzuki S."/>
            <person name="Tagami M."/>
            <person name="Waki K."/>
            <person name="Watahiki A."/>
            <person name="Okamura-Oho Y."/>
            <person name="Suzuki H."/>
            <person name="Kawai J."/>
            <person name="Hayashizaki Y."/>
        </authorList>
    </citation>
    <scope>NUCLEOTIDE SEQUENCE [LARGE SCALE MRNA]</scope>
    <source>
        <strain>C57BL/6J</strain>
        <tissue>Corpora quadrigemina</tissue>
        <tissue>Testis</tissue>
    </source>
</reference>
<reference key="2">
    <citation type="journal article" date="2010" name="Cell">
        <title>A tissue-specific atlas of mouse protein phosphorylation and expression.</title>
        <authorList>
            <person name="Huttlin E.L."/>
            <person name="Jedrychowski M.P."/>
            <person name="Elias J.E."/>
            <person name="Goswami T."/>
            <person name="Rad R."/>
            <person name="Beausoleil S.A."/>
            <person name="Villen J."/>
            <person name="Haas W."/>
            <person name="Sowa M.E."/>
            <person name="Gygi S.P."/>
        </authorList>
    </citation>
    <scope>IDENTIFICATION BY MASS SPECTROMETRY [LARGE SCALE ANALYSIS]</scope>
    <source>
        <tissue>Testis</tissue>
    </source>
</reference>
<dbReference type="EMBL" id="AK076812">
    <property type="protein sequence ID" value="BAC36492.1"/>
    <property type="molecule type" value="mRNA"/>
</dbReference>
<dbReference type="EMBL" id="AK140290">
    <property type="protein sequence ID" value="BAE24320.1"/>
    <property type="molecule type" value="mRNA"/>
</dbReference>
<dbReference type="CCDS" id="CCDS35776.1"/>
<dbReference type="RefSeq" id="NP_001028211.1">
    <property type="nucleotide sequence ID" value="NM_001033039.2"/>
</dbReference>
<dbReference type="SMR" id="Q3USL1"/>
<dbReference type="BioGRID" id="213093">
    <property type="interactions" value="1"/>
</dbReference>
<dbReference type="FunCoup" id="Q3USL1">
    <property type="interactions" value="5"/>
</dbReference>
<dbReference type="STRING" id="10090.ENSMUSP00000056212"/>
<dbReference type="iPTMnet" id="Q3USL1"/>
<dbReference type="PhosphoSitePlus" id="Q3USL1"/>
<dbReference type="SwissPalm" id="Q3USL1"/>
<dbReference type="PaxDb" id="10090-ENSMUSP00000056212"/>
<dbReference type="ProteomicsDB" id="263450"/>
<dbReference type="Antibodypedia" id="34288">
    <property type="antibodies" value="73 antibodies from 15 providers"/>
</dbReference>
<dbReference type="Ensembl" id="ENSMUST00000061878.5">
    <property type="protein sequence ID" value="ENSMUSP00000056212.5"/>
    <property type="gene ID" value="ENSMUSG00000045259.5"/>
</dbReference>
<dbReference type="GeneID" id="68874"/>
<dbReference type="KEGG" id="mmu:68874"/>
<dbReference type="UCSC" id="uc007dod.1">
    <property type="organism name" value="mouse"/>
</dbReference>
<dbReference type="AGR" id="MGI:1916124"/>
<dbReference type="CTD" id="126823"/>
<dbReference type="MGI" id="MGI:1916124">
    <property type="gene designation" value="Klhdc9"/>
</dbReference>
<dbReference type="VEuPathDB" id="HostDB:ENSMUSG00000045259"/>
<dbReference type="eggNOG" id="KOG0379">
    <property type="taxonomic scope" value="Eukaryota"/>
</dbReference>
<dbReference type="GeneTree" id="ENSGT00390000011582"/>
<dbReference type="HOGENOM" id="CLU_068365_0_0_1"/>
<dbReference type="InParanoid" id="Q3USL1"/>
<dbReference type="OMA" id="PEVAGQW"/>
<dbReference type="OrthoDB" id="10251809at2759"/>
<dbReference type="PhylomeDB" id="Q3USL1"/>
<dbReference type="TreeFam" id="TF337916"/>
<dbReference type="BioGRID-ORCS" id="68874">
    <property type="hits" value="1 hit in 76 CRISPR screens"/>
</dbReference>
<dbReference type="ChiTaRS" id="Klhdc9">
    <property type="organism name" value="mouse"/>
</dbReference>
<dbReference type="PRO" id="PR:Q3USL1"/>
<dbReference type="Proteomes" id="UP000000589">
    <property type="component" value="Chromosome 1"/>
</dbReference>
<dbReference type="RNAct" id="Q3USL1">
    <property type="molecule type" value="protein"/>
</dbReference>
<dbReference type="Bgee" id="ENSMUSG00000045259">
    <property type="expression patterns" value="Expressed in spermatocyte and 51 other cell types or tissues"/>
</dbReference>
<dbReference type="GO" id="GO:0030332">
    <property type="term" value="F:cyclin binding"/>
    <property type="evidence" value="ECO:0007669"/>
    <property type="project" value="Ensembl"/>
</dbReference>
<dbReference type="FunFam" id="2.120.10.80:FF:000125">
    <property type="entry name" value="kelch domain-containing protein 9"/>
    <property type="match status" value="1"/>
</dbReference>
<dbReference type="Gene3D" id="2.120.10.80">
    <property type="entry name" value="Kelch-type beta propeller"/>
    <property type="match status" value="2"/>
</dbReference>
<dbReference type="InterPro" id="IPR011043">
    <property type="entry name" value="Gal_Oxase/kelch_b-propeller"/>
</dbReference>
<dbReference type="InterPro" id="IPR015915">
    <property type="entry name" value="Kelch-typ_b-propeller"/>
</dbReference>
<dbReference type="InterPro" id="IPR042941">
    <property type="entry name" value="KLDC9"/>
</dbReference>
<dbReference type="PANTHER" id="PTHR47196">
    <property type="entry name" value="KELCH DOMAIN-CONTAINING PROTEIN 9"/>
    <property type="match status" value="1"/>
</dbReference>
<dbReference type="PANTHER" id="PTHR47196:SF1">
    <property type="entry name" value="KELCH DOMAIN-CONTAINING PROTEIN 9"/>
    <property type="match status" value="1"/>
</dbReference>
<dbReference type="Pfam" id="PF24681">
    <property type="entry name" value="Kelch_KLHDC2_KLHL20_DRC7"/>
    <property type="match status" value="1"/>
</dbReference>
<dbReference type="SUPFAM" id="SSF50965">
    <property type="entry name" value="Galactose oxidase, central domain"/>
    <property type="match status" value="1"/>
</dbReference>